<name>RECR_LIMF3</name>
<protein>
    <recommendedName>
        <fullName evidence="1">Recombination protein RecR</fullName>
    </recommendedName>
</protein>
<sequence>MQYPEPIARLIDSYMKLPGIGEKSATRLAFYTLGMSDADVDNFAKSLRAVKRDLHYCSVCGNITEDDPCPICKDKTRDQSRVLVVERSRDIMAMERMKEYHGLYHVLHGTISPSEGTGPQDINLESLLKRLEAHKEIQEVIVATNASLDGETTAQYLAHLIKPAGIKVTRLAHGLSAGADIDYTDEVTLFRAVQGRTEM</sequence>
<feature type="chain" id="PRO_1000089741" description="Recombination protein RecR">
    <location>
        <begin position="1"/>
        <end position="199"/>
    </location>
</feature>
<feature type="domain" description="Toprim" evidence="1">
    <location>
        <begin position="80"/>
        <end position="176"/>
    </location>
</feature>
<feature type="zinc finger region" description="C4-type" evidence="1">
    <location>
        <begin position="57"/>
        <end position="72"/>
    </location>
</feature>
<accession>B2GAD9</accession>
<comment type="function">
    <text evidence="1">May play a role in DNA repair. It seems to be involved in an RecBC-independent recombinational process of DNA repair. It may act with RecF and RecO.</text>
</comment>
<comment type="similarity">
    <text evidence="1">Belongs to the RecR family.</text>
</comment>
<dbReference type="EMBL" id="AP008937">
    <property type="protein sequence ID" value="BAG26621.1"/>
    <property type="molecule type" value="Genomic_DNA"/>
</dbReference>
<dbReference type="RefSeq" id="WP_004562762.1">
    <property type="nucleotide sequence ID" value="NC_010610.1"/>
</dbReference>
<dbReference type="SMR" id="B2GAD9"/>
<dbReference type="GeneID" id="83715393"/>
<dbReference type="KEGG" id="lfe:LAF_0285"/>
<dbReference type="eggNOG" id="COG0353">
    <property type="taxonomic scope" value="Bacteria"/>
</dbReference>
<dbReference type="HOGENOM" id="CLU_060739_1_0_9"/>
<dbReference type="Proteomes" id="UP000001697">
    <property type="component" value="Chromosome"/>
</dbReference>
<dbReference type="GO" id="GO:0003677">
    <property type="term" value="F:DNA binding"/>
    <property type="evidence" value="ECO:0007669"/>
    <property type="project" value="UniProtKB-UniRule"/>
</dbReference>
<dbReference type="GO" id="GO:0008270">
    <property type="term" value="F:zinc ion binding"/>
    <property type="evidence" value="ECO:0007669"/>
    <property type="project" value="UniProtKB-KW"/>
</dbReference>
<dbReference type="GO" id="GO:0006310">
    <property type="term" value="P:DNA recombination"/>
    <property type="evidence" value="ECO:0007669"/>
    <property type="project" value="UniProtKB-UniRule"/>
</dbReference>
<dbReference type="GO" id="GO:0006281">
    <property type="term" value="P:DNA repair"/>
    <property type="evidence" value="ECO:0007669"/>
    <property type="project" value="UniProtKB-UniRule"/>
</dbReference>
<dbReference type="CDD" id="cd01025">
    <property type="entry name" value="TOPRIM_recR"/>
    <property type="match status" value="1"/>
</dbReference>
<dbReference type="Gene3D" id="3.30.60.80">
    <property type="match status" value="1"/>
</dbReference>
<dbReference type="Gene3D" id="3.40.1360.10">
    <property type="match status" value="1"/>
</dbReference>
<dbReference type="Gene3D" id="6.10.250.240">
    <property type="match status" value="1"/>
</dbReference>
<dbReference type="Gene3D" id="1.10.8.420">
    <property type="entry name" value="RecR Domain 1"/>
    <property type="match status" value="1"/>
</dbReference>
<dbReference type="HAMAP" id="MF_00017">
    <property type="entry name" value="RecR"/>
    <property type="match status" value="1"/>
</dbReference>
<dbReference type="InterPro" id="IPR000093">
    <property type="entry name" value="DNA_Rcmb_RecR"/>
</dbReference>
<dbReference type="InterPro" id="IPR023627">
    <property type="entry name" value="Rcmb_RecR"/>
</dbReference>
<dbReference type="InterPro" id="IPR015967">
    <property type="entry name" value="Rcmb_RecR_Znf"/>
</dbReference>
<dbReference type="InterPro" id="IPR006171">
    <property type="entry name" value="TOPRIM_dom"/>
</dbReference>
<dbReference type="InterPro" id="IPR034137">
    <property type="entry name" value="TOPRIM_RecR"/>
</dbReference>
<dbReference type="NCBIfam" id="TIGR00615">
    <property type="entry name" value="recR"/>
    <property type="match status" value="1"/>
</dbReference>
<dbReference type="PANTHER" id="PTHR30446">
    <property type="entry name" value="RECOMBINATION PROTEIN RECR"/>
    <property type="match status" value="1"/>
</dbReference>
<dbReference type="PANTHER" id="PTHR30446:SF0">
    <property type="entry name" value="RECOMBINATION PROTEIN RECR"/>
    <property type="match status" value="1"/>
</dbReference>
<dbReference type="Pfam" id="PF21175">
    <property type="entry name" value="RecR_C"/>
    <property type="match status" value="1"/>
</dbReference>
<dbReference type="Pfam" id="PF21176">
    <property type="entry name" value="RecR_HhH"/>
    <property type="match status" value="1"/>
</dbReference>
<dbReference type="Pfam" id="PF02132">
    <property type="entry name" value="RecR_ZnF"/>
    <property type="match status" value="1"/>
</dbReference>
<dbReference type="Pfam" id="PF13662">
    <property type="entry name" value="Toprim_4"/>
    <property type="match status" value="1"/>
</dbReference>
<dbReference type="SMART" id="SM00493">
    <property type="entry name" value="TOPRIM"/>
    <property type="match status" value="1"/>
</dbReference>
<dbReference type="SUPFAM" id="SSF111304">
    <property type="entry name" value="Recombination protein RecR"/>
    <property type="match status" value="1"/>
</dbReference>
<dbReference type="PROSITE" id="PS01300">
    <property type="entry name" value="RECR"/>
    <property type="match status" value="1"/>
</dbReference>
<dbReference type="PROSITE" id="PS50880">
    <property type="entry name" value="TOPRIM"/>
    <property type="match status" value="1"/>
</dbReference>
<evidence type="ECO:0000255" key="1">
    <source>
        <dbReference type="HAMAP-Rule" id="MF_00017"/>
    </source>
</evidence>
<keyword id="KW-0227">DNA damage</keyword>
<keyword id="KW-0233">DNA recombination</keyword>
<keyword id="KW-0234">DNA repair</keyword>
<keyword id="KW-0479">Metal-binding</keyword>
<keyword id="KW-1185">Reference proteome</keyword>
<keyword id="KW-0862">Zinc</keyword>
<keyword id="KW-0863">Zinc-finger</keyword>
<proteinExistence type="inferred from homology"/>
<gene>
    <name evidence="1" type="primary">recR</name>
    <name type="ordered locus">LAF_0285</name>
</gene>
<organism>
    <name type="scientific">Limosilactobacillus fermentum (strain NBRC 3956 / LMG 18251)</name>
    <name type="common">Lactobacillus fermentum</name>
    <dbReference type="NCBI Taxonomy" id="334390"/>
    <lineage>
        <taxon>Bacteria</taxon>
        <taxon>Bacillati</taxon>
        <taxon>Bacillota</taxon>
        <taxon>Bacilli</taxon>
        <taxon>Lactobacillales</taxon>
        <taxon>Lactobacillaceae</taxon>
        <taxon>Limosilactobacillus</taxon>
    </lineage>
</organism>
<reference key="1">
    <citation type="journal article" date="2008" name="DNA Res.">
        <title>Comparative genome analysis of Lactobacillus reuteri and Lactobacillus fermentum reveal a genomic island for reuterin and cobalamin production.</title>
        <authorList>
            <person name="Morita H."/>
            <person name="Toh H."/>
            <person name="Fukuda S."/>
            <person name="Horikawa H."/>
            <person name="Oshima K."/>
            <person name="Suzuki T."/>
            <person name="Murakami M."/>
            <person name="Hisamatsu S."/>
            <person name="Kato Y."/>
            <person name="Takizawa T."/>
            <person name="Fukuoka H."/>
            <person name="Yoshimura T."/>
            <person name="Itoh K."/>
            <person name="O'Sullivan D.J."/>
            <person name="McKay L.L."/>
            <person name="Ohno H."/>
            <person name="Kikuchi J."/>
            <person name="Masaoka T."/>
            <person name="Hattori M."/>
        </authorList>
    </citation>
    <scope>NUCLEOTIDE SEQUENCE [LARGE SCALE GENOMIC DNA]</scope>
    <source>
        <strain>NBRC 3956 / LMG 18251</strain>
    </source>
</reference>